<accession>P81235</accession>
<sequence length="155" mass="17259">MTRSSSVDVVVRHFFLSLNIRRGRITGTPMIPYNGHNGAIEYNTNVAKNQQKILNIIFRNPILPPNIQSFKKSNSIPNIVKTINNANTVTTSANTPIPTSPKLEEINPSIIIPIHKTENIIPPIIKKIHAIRNIITITLIMSSIKSNIIKSPPKN</sequence>
<proteinExistence type="predicted"/>
<feature type="chain" id="PRO_0000107388" description="Uncharacterized protein MJ1516.1">
    <location>
        <begin position="1"/>
        <end position="155"/>
    </location>
</feature>
<protein>
    <recommendedName>
        <fullName>Uncharacterized protein MJ1516.1</fullName>
    </recommendedName>
</protein>
<name>YF1B_METJA</name>
<gene>
    <name type="ordered locus">MJ1516.1</name>
</gene>
<organism>
    <name type="scientific">Methanocaldococcus jannaschii (strain ATCC 43067 / DSM 2661 / JAL-1 / JCM 10045 / NBRC 100440)</name>
    <name type="common">Methanococcus jannaschii</name>
    <dbReference type="NCBI Taxonomy" id="243232"/>
    <lineage>
        <taxon>Archaea</taxon>
        <taxon>Methanobacteriati</taxon>
        <taxon>Methanobacteriota</taxon>
        <taxon>Methanomada group</taxon>
        <taxon>Methanococci</taxon>
        <taxon>Methanococcales</taxon>
        <taxon>Methanocaldococcaceae</taxon>
        <taxon>Methanocaldococcus</taxon>
    </lineage>
</organism>
<reference key="1">
    <citation type="journal article" date="1996" name="Science">
        <title>Complete genome sequence of the methanogenic archaeon, Methanococcus jannaschii.</title>
        <authorList>
            <person name="Bult C.J."/>
            <person name="White O."/>
            <person name="Olsen G.J."/>
            <person name="Zhou L."/>
            <person name="Fleischmann R.D."/>
            <person name="Sutton G.G."/>
            <person name="Blake J.A."/>
            <person name="FitzGerald L.M."/>
            <person name="Clayton R.A."/>
            <person name="Gocayne J.D."/>
            <person name="Kerlavage A.R."/>
            <person name="Dougherty B.A."/>
            <person name="Tomb J.-F."/>
            <person name="Adams M.D."/>
            <person name="Reich C.I."/>
            <person name="Overbeek R."/>
            <person name="Kirkness E.F."/>
            <person name="Weinstock K.G."/>
            <person name="Merrick J.M."/>
            <person name="Glodek A."/>
            <person name="Scott J.L."/>
            <person name="Geoghagen N.S.M."/>
            <person name="Weidman J.F."/>
            <person name="Fuhrmann J.L."/>
            <person name="Nguyen D."/>
            <person name="Utterback T.R."/>
            <person name="Kelley J.M."/>
            <person name="Peterson J.D."/>
            <person name="Sadow P.W."/>
            <person name="Hanna M.C."/>
            <person name="Cotton M.D."/>
            <person name="Roberts K.M."/>
            <person name="Hurst M.A."/>
            <person name="Kaine B.P."/>
            <person name="Borodovsky M."/>
            <person name="Klenk H.-P."/>
            <person name="Fraser C.M."/>
            <person name="Smith H.O."/>
            <person name="Woese C.R."/>
            <person name="Venter J.C."/>
        </authorList>
    </citation>
    <scope>NUCLEOTIDE SEQUENCE [LARGE SCALE GENOMIC DNA]</scope>
    <source>
        <strain>ATCC 43067 / DSM 2661 / JAL-1 / JCM 10045 / NBRC 100440</strain>
    </source>
</reference>
<keyword id="KW-1185">Reference proteome</keyword>
<dbReference type="EMBL" id="L77117">
    <property type="protein sequence ID" value="AAB99537.1"/>
    <property type="molecule type" value="Genomic_DNA"/>
</dbReference>
<dbReference type="STRING" id="243232.MJ_1516.1"/>
<dbReference type="PaxDb" id="243232-MJ_1516.1"/>
<dbReference type="EnsemblBacteria" id="AAB99537">
    <property type="protein sequence ID" value="AAB99537"/>
    <property type="gene ID" value="MJ_1516.1"/>
</dbReference>
<dbReference type="KEGG" id="mja:MJ_1516.1"/>
<dbReference type="HOGENOM" id="CLU_1691556_0_0_2"/>
<dbReference type="InParanoid" id="P81235"/>
<dbReference type="Proteomes" id="UP000000805">
    <property type="component" value="Chromosome"/>
</dbReference>